<proteinExistence type="inferred from homology"/>
<organism>
    <name type="scientific">Prochlorococcus marinus (strain NATL2A)</name>
    <dbReference type="NCBI Taxonomy" id="59920"/>
    <lineage>
        <taxon>Bacteria</taxon>
        <taxon>Bacillati</taxon>
        <taxon>Cyanobacteriota</taxon>
        <taxon>Cyanophyceae</taxon>
        <taxon>Synechococcales</taxon>
        <taxon>Prochlorococcaceae</taxon>
        <taxon>Prochlorococcus</taxon>
    </lineage>
</organism>
<sequence length="182" mass="20175">MKKKLLFLGPPGAGKGTQANLFCKKYGLIHLSTGDLLRDEVSSGSVLGIKAAEIMNKGELVSDELVLSIVEGRLANINEGWLLDGFPRNVNQANSLKNLLEKINQPLEGVILIKVADDYLIKRLVERGRQDDNEQVITNRLKIYREKTSPLIDLYKKQGILEEIEGNADIDVVFSCIEKSLG</sequence>
<feature type="chain" id="PRO_1000058878" description="Adenylate kinase">
    <location>
        <begin position="1"/>
        <end position="182"/>
    </location>
</feature>
<feature type="region of interest" description="NMP" evidence="1">
    <location>
        <begin position="32"/>
        <end position="61"/>
    </location>
</feature>
<feature type="region of interest" description="LID" evidence="1">
    <location>
        <begin position="126"/>
        <end position="132"/>
    </location>
</feature>
<feature type="binding site" evidence="1">
    <location>
        <begin position="12"/>
        <end position="17"/>
    </location>
    <ligand>
        <name>ATP</name>
        <dbReference type="ChEBI" id="CHEBI:30616"/>
    </ligand>
</feature>
<feature type="binding site" evidence="1">
    <location>
        <position position="33"/>
    </location>
    <ligand>
        <name>AMP</name>
        <dbReference type="ChEBI" id="CHEBI:456215"/>
    </ligand>
</feature>
<feature type="binding site" evidence="1">
    <location>
        <position position="38"/>
    </location>
    <ligand>
        <name>AMP</name>
        <dbReference type="ChEBI" id="CHEBI:456215"/>
    </ligand>
</feature>
<feature type="binding site" evidence="1">
    <location>
        <begin position="59"/>
        <end position="61"/>
    </location>
    <ligand>
        <name>AMP</name>
        <dbReference type="ChEBI" id="CHEBI:456215"/>
    </ligand>
</feature>
<feature type="binding site" evidence="1">
    <location>
        <begin position="85"/>
        <end position="88"/>
    </location>
    <ligand>
        <name>AMP</name>
        <dbReference type="ChEBI" id="CHEBI:456215"/>
    </ligand>
</feature>
<feature type="binding site" evidence="1">
    <location>
        <position position="92"/>
    </location>
    <ligand>
        <name>AMP</name>
        <dbReference type="ChEBI" id="CHEBI:456215"/>
    </ligand>
</feature>
<feature type="binding site" evidence="1">
    <location>
        <position position="127"/>
    </location>
    <ligand>
        <name>ATP</name>
        <dbReference type="ChEBI" id="CHEBI:30616"/>
    </ligand>
</feature>
<feature type="binding site" evidence="1">
    <location>
        <position position="129"/>
    </location>
    <ligand>
        <name>AMP</name>
        <dbReference type="ChEBI" id="CHEBI:456215"/>
    </ligand>
</feature>
<feature type="binding site" evidence="1">
    <location>
        <position position="140"/>
    </location>
    <ligand>
        <name>AMP</name>
        <dbReference type="ChEBI" id="CHEBI:456215"/>
    </ligand>
</feature>
<feature type="binding site" evidence="1">
    <location>
        <position position="168"/>
    </location>
    <ligand>
        <name>ATP</name>
        <dbReference type="ChEBI" id="CHEBI:30616"/>
    </ligand>
</feature>
<protein>
    <recommendedName>
        <fullName evidence="1">Adenylate kinase</fullName>
        <shortName evidence="1">AK</shortName>
        <ecNumber evidence="1">2.7.4.3</ecNumber>
    </recommendedName>
    <alternativeName>
        <fullName evidence="1">ATP-AMP transphosphorylase</fullName>
    </alternativeName>
    <alternativeName>
        <fullName evidence="1">ATP:AMP phosphotransferase</fullName>
    </alternativeName>
    <alternativeName>
        <fullName evidence="1">Adenylate monophosphate kinase</fullName>
    </alternativeName>
</protein>
<gene>
    <name evidence="1" type="primary">adk</name>
    <name type="ordered locus">PMN2A_1110</name>
</gene>
<accession>Q46IS8</accession>
<comment type="function">
    <text evidence="1">Catalyzes the reversible transfer of the terminal phosphate group between ATP and AMP. Plays an important role in cellular energy homeostasis and in adenine nucleotide metabolism.</text>
</comment>
<comment type="catalytic activity">
    <reaction evidence="1">
        <text>AMP + ATP = 2 ADP</text>
        <dbReference type="Rhea" id="RHEA:12973"/>
        <dbReference type="ChEBI" id="CHEBI:30616"/>
        <dbReference type="ChEBI" id="CHEBI:456215"/>
        <dbReference type="ChEBI" id="CHEBI:456216"/>
        <dbReference type="EC" id="2.7.4.3"/>
    </reaction>
</comment>
<comment type="pathway">
    <text evidence="1">Purine metabolism; AMP biosynthesis via salvage pathway; AMP from ADP: step 1/1.</text>
</comment>
<comment type="subunit">
    <text evidence="1">Monomer.</text>
</comment>
<comment type="subcellular location">
    <subcellularLocation>
        <location evidence="1">Cytoplasm</location>
    </subcellularLocation>
</comment>
<comment type="domain">
    <text evidence="1">Consists of three domains, a large central CORE domain and two small peripheral domains, NMPbind and LID, which undergo movements during catalysis. The LID domain closes over the site of phosphoryl transfer upon ATP binding. Assembling and dissambling the active center during each catalytic cycle provides an effective means to prevent ATP hydrolysis.</text>
</comment>
<comment type="similarity">
    <text evidence="1">Belongs to the adenylate kinase family.</text>
</comment>
<reference key="1">
    <citation type="journal article" date="2007" name="PLoS Genet.">
        <title>Patterns and implications of gene gain and loss in the evolution of Prochlorococcus.</title>
        <authorList>
            <person name="Kettler G.C."/>
            <person name="Martiny A.C."/>
            <person name="Huang K."/>
            <person name="Zucker J."/>
            <person name="Coleman M.L."/>
            <person name="Rodrigue S."/>
            <person name="Chen F."/>
            <person name="Lapidus A."/>
            <person name="Ferriera S."/>
            <person name="Johnson J."/>
            <person name="Steglich C."/>
            <person name="Church G.M."/>
            <person name="Richardson P."/>
            <person name="Chisholm S.W."/>
        </authorList>
    </citation>
    <scope>NUCLEOTIDE SEQUENCE [LARGE SCALE GENOMIC DNA]</scope>
    <source>
        <strain>NATL2A</strain>
    </source>
</reference>
<dbReference type="EC" id="2.7.4.3" evidence="1"/>
<dbReference type="EMBL" id="CP000095">
    <property type="protein sequence ID" value="AAZ58600.1"/>
    <property type="molecule type" value="Genomic_DNA"/>
</dbReference>
<dbReference type="RefSeq" id="WP_011295454.1">
    <property type="nucleotide sequence ID" value="NC_007335.2"/>
</dbReference>
<dbReference type="SMR" id="Q46IS8"/>
<dbReference type="STRING" id="59920.PMN2A_1110"/>
<dbReference type="KEGG" id="pmn:PMN2A_1110"/>
<dbReference type="HOGENOM" id="CLU_032354_4_1_3"/>
<dbReference type="OrthoDB" id="9805030at2"/>
<dbReference type="PhylomeDB" id="Q46IS8"/>
<dbReference type="UniPathway" id="UPA00588">
    <property type="reaction ID" value="UER00649"/>
</dbReference>
<dbReference type="Proteomes" id="UP000002535">
    <property type="component" value="Chromosome"/>
</dbReference>
<dbReference type="GO" id="GO:0005737">
    <property type="term" value="C:cytoplasm"/>
    <property type="evidence" value="ECO:0007669"/>
    <property type="project" value="UniProtKB-SubCell"/>
</dbReference>
<dbReference type="GO" id="GO:0004017">
    <property type="term" value="F:adenylate kinase activity"/>
    <property type="evidence" value="ECO:0007669"/>
    <property type="project" value="UniProtKB-UniRule"/>
</dbReference>
<dbReference type="GO" id="GO:0005524">
    <property type="term" value="F:ATP binding"/>
    <property type="evidence" value="ECO:0007669"/>
    <property type="project" value="UniProtKB-UniRule"/>
</dbReference>
<dbReference type="GO" id="GO:0044209">
    <property type="term" value="P:AMP salvage"/>
    <property type="evidence" value="ECO:0007669"/>
    <property type="project" value="UniProtKB-UniRule"/>
</dbReference>
<dbReference type="CDD" id="cd01428">
    <property type="entry name" value="ADK"/>
    <property type="match status" value="1"/>
</dbReference>
<dbReference type="Gene3D" id="3.40.50.300">
    <property type="entry name" value="P-loop containing nucleotide triphosphate hydrolases"/>
    <property type="match status" value="1"/>
</dbReference>
<dbReference type="HAMAP" id="MF_00235">
    <property type="entry name" value="Adenylate_kinase_Adk"/>
    <property type="match status" value="1"/>
</dbReference>
<dbReference type="InterPro" id="IPR000850">
    <property type="entry name" value="Adenylat/UMP-CMP_kin"/>
</dbReference>
<dbReference type="InterPro" id="IPR033690">
    <property type="entry name" value="Adenylat_kinase_CS"/>
</dbReference>
<dbReference type="InterPro" id="IPR027417">
    <property type="entry name" value="P-loop_NTPase"/>
</dbReference>
<dbReference type="NCBIfam" id="NF001381">
    <property type="entry name" value="PRK00279.1-3"/>
    <property type="match status" value="1"/>
</dbReference>
<dbReference type="NCBIfam" id="NF011100">
    <property type="entry name" value="PRK14527.1"/>
    <property type="match status" value="1"/>
</dbReference>
<dbReference type="NCBIfam" id="NF011104">
    <property type="entry name" value="PRK14531.1"/>
    <property type="match status" value="1"/>
</dbReference>
<dbReference type="NCBIfam" id="NF011105">
    <property type="entry name" value="PRK14532.1"/>
    <property type="match status" value="1"/>
</dbReference>
<dbReference type="PANTHER" id="PTHR23359">
    <property type="entry name" value="NUCLEOTIDE KINASE"/>
    <property type="match status" value="1"/>
</dbReference>
<dbReference type="Pfam" id="PF00406">
    <property type="entry name" value="ADK"/>
    <property type="match status" value="1"/>
</dbReference>
<dbReference type="PRINTS" id="PR00094">
    <property type="entry name" value="ADENYLTKNASE"/>
</dbReference>
<dbReference type="SUPFAM" id="SSF52540">
    <property type="entry name" value="P-loop containing nucleoside triphosphate hydrolases"/>
    <property type="match status" value="1"/>
</dbReference>
<dbReference type="PROSITE" id="PS00113">
    <property type="entry name" value="ADENYLATE_KINASE"/>
    <property type="match status" value="1"/>
</dbReference>
<name>KAD_PROMT</name>
<keyword id="KW-0067">ATP-binding</keyword>
<keyword id="KW-0963">Cytoplasm</keyword>
<keyword id="KW-0418">Kinase</keyword>
<keyword id="KW-0545">Nucleotide biosynthesis</keyword>
<keyword id="KW-0547">Nucleotide-binding</keyword>
<keyword id="KW-1185">Reference proteome</keyword>
<keyword id="KW-0808">Transferase</keyword>
<evidence type="ECO:0000255" key="1">
    <source>
        <dbReference type="HAMAP-Rule" id="MF_00235"/>
    </source>
</evidence>